<organism>
    <name type="scientific">Escherichia coli (strain SMS-3-5 / SECEC)</name>
    <dbReference type="NCBI Taxonomy" id="439855"/>
    <lineage>
        <taxon>Bacteria</taxon>
        <taxon>Pseudomonadati</taxon>
        <taxon>Pseudomonadota</taxon>
        <taxon>Gammaproteobacteria</taxon>
        <taxon>Enterobacterales</taxon>
        <taxon>Enterobacteriaceae</taxon>
        <taxon>Escherichia</taxon>
    </lineage>
</organism>
<gene>
    <name evidence="1" type="primary">kbaZ</name>
    <name type="ordered locus">EcSMS35_3429</name>
</gene>
<evidence type="ECO:0000255" key="1">
    <source>
        <dbReference type="HAMAP-Rule" id="MF_01295"/>
    </source>
</evidence>
<comment type="function">
    <text evidence="1">Component of the tagatose-1,6-bisphosphate aldolase KbaYZ that is required for full activity and stability of the Y subunit. Could have a chaperone-like function for the proper and stable folding of KbaY. When expressed alone, KbaZ does not show any aldolase activity.</text>
</comment>
<comment type="pathway">
    <text evidence="1">Carbohydrate metabolism; D-tagatose 6-phosphate degradation; D-glyceraldehyde 3-phosphate and glycerone phosphate from D-tagatose 6-phosphate: step 2/2.</text>
</comment>
<comment type="subunit">
    <text evidence="1">Forms a complex with KbaY.</text>
</comment>
<comment type="similarity">
    <text evidence="1">Belongs to the GatZ/KbaZ family. KbaZ subfamily.</text>
</comment>
<dbReference type="EMBL" id="CP000970">
    <property type="protein sequence ID" value="ACB16740.1"/>
    <property type="molecule type" value="Genomic_DNA"/>
</dbReference>
<dbReference type="RefSeq" id="WP_000681958.1">
    <property type="nucleotide sequence ID" value="NC_010498.1"/>
</dbReference>
<dbReference type="SMR" id="B1LFN5"/>
<dbReference type="KEGG" id="ecm:EcSMS35_3429"/>
<dbReference type="HOGENOM" id="CLU_053334_0_0_6"/>
<dbReference type="UniPathway" id="UPA00704">
    <property type="reaction ID" value="UER00716"/>
</dbReference>
<dbReference type="Proteomes" id="UP000007011">
    <property type="component" value="Chromosome"/>
</dbReference>
<dbReference type="GO" id="GO:0005886">
    <property type="term" value="C:plasma membrane"/>
    <property type="evidence" value="ECO:0007669"/>
    <property type="project" value="TreeGrafter"/>
</dbReference>
<dbReference type="GO" id="GO:0005975">
    <property type="term" value="P:carbohydrate metabolic process"/>
    <property type="evidence" value="ECO:0007669"/>
    <property type="project" value="InterPro"/>
</dbReference>
<dbReference type="GO" id="GO:2001059">
    <property type="term" value="P:D-tagatose 6-phosphate catabolic process"/>
    <property type="evidence" value="ECO:0007669"/>
    <property type="project" value="UniProtKB-UniRule"/>
</dbReference>
<dbReference type="GO" id="GO:0009401">
    <property type="term" value="P:phosphoenolpyruvate-dependent sugar phosphotransferase system"/>
    <property type="evidence" value="ECO:0007669"/>
    <property type="project" value="TreeGrafter"/>
</dbReference>
<dbReference type="Gene3D" id="3.20.20.70">
    <property type="entry name" value="Aldolase class I"/>
    <property type="match status" value="1"/>
</dbReference>
<dbReference type="Gene3D" id="1.10.400.20">
    <property type="entry name" value="putative tagatose 6-phosphate kinase domain like"/>
    <property type="match status" value="1"/>
</dbReference>
<dbReference type="HAMAP" id="MF_01295">
    <property type="entry name" value="Tagatose_aldol_KbaZ"/>
    <property type="match status" value="1"/>
</dbReference>
<dbReference type="InterPro" id="IPR013785">
    <property type="entry name" value="Aldolase_TIM"/>
</dbReference>
<dbReference type="InterPro" id="IPR012062">
    <property type="entry name" value="GatZ/KbaZ-like"/>
</dbReference>
<dbReference type="InterPro" id="IPR050303">
    <property type="entry name" value="GatZ_KbaZ_carbometab"/>
</dbReference>
<dbReference type="InterPro" id="IPR023435">
    <property type="entry name" value="TagBP_ald_KbaZ"/>
</dbReference>
<dbReference type="NCBIfam" id="TIGR02810">
    <property type="entry name" value="agaZ_gatZ"/>
    <property type="match status" value="1"/>
</dbReference>
<dbReference type="NCBIfam" id="NF012002">
    <property type="entry name" value="PRK15458.1"/>
    <property type="match status" value="1"/>
</dbReference>
<dbReference type="PANTHER" id="PTHR32502:SF2">
    <property type="entry name" value="D-TAGATOSE-1,6-BISPHOSPHATE ALDOLASE SUBUNIT KBAZ"/>
    <property type="match status" value="1"/>
</dbReference>
<dbReference type="PANTHER" id="PTHR32502">
    <property type="entry name" value="N-ACETYLGALACTOSAMINE PERMEASE II COMPONENT-RELATED"/>
    <property type="match status" value="1"/>
</dbReference>
<dbReference type="Pfam" id="PF08013">
    <property type="entry name" value="GatZ_KbaZ-like"/>
    <property type="match status" value="1"/>
</dbReference>
<dbReference type="PIRSF" id="PIRSF009264">
    <property type="entry name" value="TagBP_ald_AgaZ"/>
    <property type="match status" value="1"/>
</dbReference>
<dbReference type="SUPFAM" id="SSF51569">
    <property type="entry name" value="Aldolase"/>
    <property type="match status" value="1"/>
</dbReference>
<protein>
    <recommendedName>
        <fullName evidence="1">D-tagatose-1,6-bisphosphate aldolase subunit KbaZ</fullName>
    </recommendedName>
</protein>
<reference key="1">
    <citation type="journal article" date="2008" name="J. Bacteriol.">
        <title>Insights into the environmental resistance gene pool from the genome sequence of the multidrug-resistant environmental isolate Escherichia coli SMS-3-5.</title>
        <authorList>
            <person name="Fricke W.F."/>
            <person name="Wright M.S."/>
            <person name="Lindell A.H."/>
            <person name="Harkins D.M."/>
            <person name="Baker-Austin C."/>
            <person name="Ravel J."/>
            <person name="Stepanauskas R."/>
        </authorList>
    </citation>
    <scope>NUCLEOTIDE SEQUENCE [LARGE SCALE GENOMIC DNA]</scope>
    <source>
        <strain>SMS-3-5 / SECEC</strain>
    </source>
</reference>
<feature type="chain" id="PRO_0000372528" description="D-tagatose-1,6-bisphosphate aldolase subunit KbaZ">
    <location>
        <begin position="1"/>
        <end position="426"/>
    </location>
</feature>
<proteinExistence type="inferred from homology"/>
<accession>B1LFN5</accession>
<name>KBAZ_ECOSM</name>
<sequence>MKHLTEMVRQHKEGKTNGIYAVCSAHPLVLEAAIRYASANQTPLLIEATSNQVDQFGGYTGMTPADFRGFVCQLADSLNFPQDALILGGDHLGPNRWQNLPAAQAMANADDLIKSYVAAGFKKIHLDCSMSCQDDPIPLTDDIVAERAARLAKVAEETCREHFGAADLEYVIGTEVPVPGGAHETLSELAVTTPDAARATLEAHRHAFEKQGLSAIWPRIIALVVQPGVEFDHTNVIDYQPVKATALSQMVENYETLIFEAHSTDYQTPQSLRQLVIDHFAILKVGPALTFALREALFSLAAIEEELVPAKACSGLRQVLENVMLDRPEYWQSHYHGDGNARRLARGYSYSDRVRYYWPDSQIDDAFAHLVRNLADSPIPLPLISQYLPLQYVKVRSGELQPTPRELIINHIQDILAQYHTACEGQ</sequence>